<comment type="similarity">
    <text evidence="1">Belongs to the SlyX family.</text>
</comment>
<dbReference type="EMBL" id="BA000031">
    <property type="protein sequence ID" value="BAC61043.1"/>
    <property type="molecule type" value="Genomic_DNA"/>
</dbReference>
<dbReference type="RefSeq" id="NP_799159.1">
    <property type="nucleotide sequence ID" value="NC_004603.1"/>
</dbReference>
<dbReference type="RefSeq" id="WP_005458294.1">
    <property type="nucleotide sequence ID" value="NC_004603.1"/>
</dbReference>
<dbReference type="SMR" id="Q87L36"/>
<dbReference type="GeneID" id="1190330"/>
<dbReference type="KEGG" id="vpa:VP2780"/>
<dbReference type="PATRIC" id="fig|223926.6.peg.2676"/>
<dbReference type="eggNOG" id="COG2900">
    <property type="taxonomic scope" value="Bacteria"/>
</dbReference>
<dbReference type="HOGENOM" id="CLU_180796_4_0_6"/>
<dbReference type="Proteomes" id="UP000002493">
    <property type="component" value="Chromosome 1"/>
</dbReference>
<dbReference type="Gene3D" id="1.20.5.300">
    <property type="match status" value="1"/>
</dbReference>
<dbReference type="HAMAP" id="MF_00715">
    <property type="entry name" value="SlyX"/>
    <property type="match status" value="1"/>
</dbReference>
<dbReference type="InterPro" id="IPR007236">
    <property type="entry name" value="SlyX"/>
</dbReference>
<dbReference type="NCBIfam" id="NF003357">
    <property type="entry name" value="PRK04406.1"/>
    <property type="match status" value="1"/>
</dbReference>
<dbReference type="PANTHER" id="PTHR36508">
    <property type="entry name" value="PROTEIN SLYX"/>
    <property type="match status" value="1"/>
</dbReference>
<dbReference type="PANTHER" id="PTHR36508:SF1">
    <property type="entry name" value="PROTEIN SLYX"/>
    <property type="match status" value="1"/>
</dbReference>
<dbReference type="Pfam" id="PF04102">
    <property type="entry name" value="SlyX"/>
    <property type="match status" value="1"/>
</dbReference>
<feature type="chain" id="PRO_0000209217" description="Protein SlyX homolog">
    <location>
        <begin position="1"/>
        <end position="75"/>
    </location>
</feature>
<feature type="region of interest" description="Disordered" evidence="2">
    <location>
        <begin position="56"/>
        <end position="75"/>
    </location>
</feature>
<name>SLYX_VIBPA</name>
<protein>
    <recommendedName>
        <fullName evidence="1">Protein SlyX homolog</fullName>
    </recommendedName>
</protein>
<reference key="1">
    <citation type="journal article" date="2003" name="Lancet">
        <title>Genome sequence of Vibrio parahaemolyticus: a pathogenic mechanism distinct from that of V. cholerae.</title>
        <authorList>
            <person name="Makino K."/>
            <person name="Oshima K."/>
            <person name="Kurokawa K."/>
            <person name="Yokoyama K."/>
            <person name="Uda T."/>
            <person name="Tagomori K."/>
            <person name="Iijima Y."/>
            <person name="Najima M."/>
            <person name="Nakano M."/>
            <person name="Yamashita A."/>
            <person name="Kubota Y."/>
            <person name="Kimura S."/>
            <person name="Yasunaga T."/>
            <person name="Honda T."/>
            <person name="Shinagawa H."/>
            <person name="Hattori M."/>
            <person name="Iida T."/>
        </authorList>
    </citation>
    <scope>NUCLEOTIDE SEQUENCE [LARGE SCALE GENOMIC DNA]</scope>
    <source>
        <strain>RIMD 2210633</strain>
    </source>
</reference>
<organism>
    <name type="scientific">Vibrio parahaemolyticus serotype O3:K6 (strain RIMD 2210633)</name>
    <dbReference type="NCBI Taxonomy" id="223926"/>
    <lineage>
        <taxon>Bacteria</taxon>
        <taxon>Pseudomonadati</taxon>
        <taxon>Pseudomonadota</taxon>
        <taxon>Gammaproteobacteria</taxon>
        <taxon>Vibrionales</taxon>
        <taxon>Vibrionaceae</taxon>
        <taxon>Vibrio</taxon>
    </lineage>
</organism>
<evidence type="ECO:0000255" key="1">
    <source>
        <dbReference type="HAMAP-Rule" id="MF_00715"/>
    </source>
</evidence>
<evidence type="ECO:0000256" key="2">
    <source>
        <dbReference type="SAM" id="MobiDB-lite"/>
    </source>
</evidence>
<accession>Q87L36</accession>
<sequence>MTEKLIEQLEARINDLECQVAFQEQTIEDLNSALSQQQLQITKMQDQMKYVVGKVKNMDSSNMEDPANEPPPPHY</sequence>
<proteinExistence type="inferred from homology"/>
<gene>
    <name evidence="1" type="primary">slyX</name>
    <name type="ordered locus">VP2780</name>
</gene>